<comment type="function">
    <text evidence="1 2">Subunit e, of the mitochondrial membrane ATP synthase complex (F(1)F(0) ATP synthase or Complex V) that produces ATP from ADP in the presence of a proton gradient across the membrane which is generated by electron transport complexes of the respiratory chain. ATP synthase complex consist of a soluble F(1) head domain - the catalytic core - and a membrane F(1) domain - the membrane proton channel. These two domains are linked by a central stalk rotating inside the F(1) region and a stationary peripheral stalk. During catalysis, ATP synthesis in the catalytic domain of F(1) is coupled via a rotary mechanism of the central stalk subunits to proton translocation (By similarity). In vivo, can only synthesize ATP although its ATP hydrolase activity can be activated artificially in vitro (By similarity). Part of the complex F(0) domain (By similarity).</text>
</comment>
<comment type="subunit">
    <text evidence="2">Component of the ATP synthase complex composed at least of ATP5F1A/subunit alpha, ATP5F1B/subunit beta, ATP5MC1/subunit c (homooctomer), MT-ATP6/subunit a, MT-ATP8/subunit 8, ATP5ME/subunit e, ATP5MF/subunit f, ATP5MG/subunit g, ATP5MK/subunit k, ATP5MJ/subunit j, ATP5F1C/subunit gamma, ATP5F1D/subunit delta, ATP5F1E/subunit epsilon, ATP5PF/subunit F6, ATP5PB/subunit b, ATP5PD/subunit d, ATP5PO/subunit OSCP. ATP synthase complex consists of a soluble F(1) head domain (subunits alpha(3) and beta(3)) - the catalytic core - and a membrane F(0) domain - the membrane proton channel (subunits c, a, 8, e, f, g, k and j). These two domains are linked by a central stalk (subunits gamma, delta, and epsilon) rotating inside the F1 region and a stationary peripheral stalk (subunits F6, b, d, and OSCP).</text>
</comment>
<comment type="subcellular location">
    <subcellularLocation>
        <location>Mitochondrion</location>
    </subcellularLocation>
    <subcellularLocation>
        <location>Mitochondrion inner membrane</location>
    </subcellularLocation>
</comment>
<comment type="induction">
    <text>By UV light.</text>
</comment>
<comment type="similarity">
    <text evidence="4">Belongs to the ATPase e subunit family.</text>
</comment>
<organism>
    <name type="scientific">Cricetulus longicaudatus</name>
    <name type="common">Long-tailed dwarf hamster</name>
    <dbReference type="NCBI Taxonomy" id="10030"/>
    <lineage>
        <taxon>Eukaryota</taxon>
        <taxon>Metazoa</taxon>
        <taxon>Chordata</taxon>
        <taxon>Craniata</taxon>
        <taxon>Vertebrata</taxon>
        <taxon>Euteleostomi</taxon>
        <taxon>Mammalia</taxon>
        <taxon>Eutheria</taxon>
        <taxon>Euarchontoglires</taxon>
        <taxon>Glires</taxon>
        <taxon>Rodentia</taxon>
        <taxon>Myomorpha</taxon>
        <taxon>Muroidea</taxon>
        <taxon>Cricetidae</taxon>
        <taxon>Cricetinae</taxon>
        <taxon>Cricetulus</taxon>
    </lineage>
</organism>
<proteinExistence type="evidence at transcript level"/>
<reference key="1">
    <citation type="journal article" date="1988" name="Mol. Cell. Biol.">
        <title>Coordinate induction of metallothioneins I and II in rodent cells by UV irradiation.</title>
        <authorList>
            <person name="Fornace A.J. Jr."/>
            <person name="Schalch H."/>
            <person name="Alamo I. Jr."/>
        </authorList>
    </citation>
    <scope>NUCLEOTIDE SEQUENCE [MRNA]</scope>
</reference>
<feature type="chain" id="PRO_0000071683" description="ATP synthase F(0) complex subunit e, mitochondrial">
    <location>
        <begin position="1"/>
        <end position="69"/>
    </location>
</feature>
<feature type="modified residue" description="N6-acetyllysine" evidence="3">
    <location>
        <position position="34"/>
    </location>
</feature>
<name>ATP5I_CRILO</name>
<dbReference type="EMBL" id="M22350">
    <property type="protein sequence ID" value="AAA37028.1"/>
    <property type="molecule type" value="mRNA"/>
</dbReference>
<dbReference type="SMR" id="P12633"/>
<dbReference type="GO" id="GO:0005743">
    <property type="term" value="C:mitochondrial inner membrane"/>
    <property type="evidence" value="ECO:0007669"/>
    <property type="project" value="UniProtKB-SubCell"/>
</dbReference>
<dbReference type="GO" id="GO:0045259">
    <property type="term" value="C:proton-transporting ATP synthase complex"/>
    <property type="evidence" value="ECO:0000250"/>
    <property type="project" value="UniProtKB"/>
</dbReference>
<dbReference type="GO" id="GO:0015078">
    <property type="term" value="F:proton transmembrane transporter activity"/>
    <property type="evidence" value="ECO:0007669"/>
    <property type="project" value="InterPro"/>
</dbReference>
<dbReference type="GO" id="GO:0015986">
    <property type="term" value="P:proton motive force-driven ATP synthesis"/>
    <property type="evidence" value="ECO:0007669"/>
    <property type="project" value="InterPro"/>
</dbReference>
<dbReference type="InterPro" id="IPR008386">
    <property type="entry name" value="ATP_synth_F0_esu_mt"/>
</dbReference>
<dbReference type="PANTHER" id="PTHR12427">
    <property type="entry name" value="ATP SYNTHASE E CHAIN, MITOCHONDRIAL"/>
    <property type="match status" value="1"/>
</dbReference>
<dbReference type="PANTHER" id="PTHR12427:SF1">
    <property type="entry name" value="ATP SYNTHASE SUBUNIT E, MITOCHONDRIAL"/>
    <property type="match status" value="1"/>
</dbReference>
<dbReference type="Pfam" id="PF05680">
    <property type="entry name" value="ATP-synt_E"/>
    <property type="match status" value="1"/>
</dbReference>
<sequence length="69" mass="7930">MVPPVQVSPLIKLGRYSALVLGMAYGAKRYSYLKPRAEEERRVAAEEKKRLDELKRIERELAEGDTILK</sequence>
<keyword id="KW-0007">Acetylation</keyword>
<keyword id="KW-0066">ATP synthesis</keyword>
<keyword id="KW-0138">CF(0)</keyword>
<keyword id="KW-0375">Hydrogen ion transport</keyword>
<keyword id="KW-0406">Ion transport</keyword>
<keyword id="KW-0472">Membrane</keyword>
<keyword id="KW-0496">Mitochondrion</keyword>
<keyword id="KW-0999">Mitochondrion inner membrane</keyword>
<keyword id="KW-0813">Transport</keyword>
<evidence type="ECO:0000250" key="1">
    <source>
        <dbReference type="UniProtKB" id="P19483"/>
    </source>
</evidence>
<evidence type="ECO:0000250" key="2">
    <source>
        <dbReference type="UniProtKB" id="P56385"/>
    </source>
</evidence>
<evidence type="ECO:0000250" key="3">
    <source>
        <dbReference type="UniProtKB" id="Q06185"/>
    </source>
</evidence>
<evidence type="ECO:0000305" key="4"/>
<accession>P12633</accession>
<protein>
    <recommendedName>
        <fullName evidence="2">ATP synthase F(0) complex subunit e, mitochondrial</fullName>
        <shortName>ATPase subunit e</shortName>
    </recommendedName>
    <alternativeName>
        <fullName evidence="4">ATP synthase membrane subunit e</fullName>
    </alternativeName>
    <alternativeName>
        <fullName>UV-inducible PU4 protein</fullName>
    </alternativeName>
</protein>
<gene>
    <name evidence="2" type="primary">ATP5ME</name>
    <name type="synonym">ATP5I</name>
</gene>